<accession>Q9X4W3</accession>
<accession>Q9JQ03</accession>
<proteinExistence type="inferred from homology"/>
<organism>
    <name type="scientific">Vibrio cholerae serotype O1 (strain ATCC 39315 / El Tor Inaba N16961)</name>
    <dbReference type="NCBI Taxonomy" id="243277"/>
    <lineage>
        <taxon>Bacteria</taxon>
        <taxon>Pseudomonadati</taxon>
        <taxon>Pseudomonadota</taxon>
        <taxon>Gammaproteobacteria</taxon>
        <taxon>Vibrionales</taxon>
        <taxon>Vibrionaceae</taxon>
        <taxon>Vibrio</taxon>
    </lineage>
</organism>
<reference key="1">
    <citation type="journal article" date="1999" name="Proc. Natl. Acad. Sci. U.S.A.">
        <title>Identification of a vibrio cholerae RTX toxin gene cluster that is tightly linked to the cholera toxin prophage.</title>
        <authorList>
            <person name="Lin W."/>
            <person name="Fullner K.J."/>
            <person name="Clayton R."/>
            <person name="Sexton J.A."/>
            <person name="Rogers M.B."/>
            <person name="Calia K.E."/>
            <person name="Calderwood S.B."/>
            <person name="Fraser C."/>
            <person name="Mekalanos J.J."/>
        </authorList>
    </citation>
    <scope>NUCLEOTIDE SEQUENCE [GENOMIC DNA]</scope>
    <source>
        <strain>ATCC 39315 / El Tor Inaba N16961</strain>
    </source>
</reference>
<reference key="2">
    <citation type="journal article" date="2000" name="Nature">
        <title>DNA sequence of both chromosomes of the cholera pathogen Vibrio cholerae.</title>
        <authorList>
            <person name="Heidelberg J.F."/>
            <person name="Eisen J.A."/>
            <person name="Nelson W.C."/>
            <person name="Clayton R.A."/>
            <person name="Gwinn M.L."/>
            <person name="Dodson R.J."/>
            <person name="Haft D.H."/>
            <person name="Hickey E.K."/>
            <person name="Peterson J.D."/>
            <person name="Umayam L.A."/>
            <person name="Gill S.R."/>
            <person name="Nelson K.E."/>
            <person name="Read T.D."/>
            <person name="Tettelin H."/>
            <person name="Richardson D.L."/>
            <person name="Ermolaeva M.D."/>
            <person name="Vamathevan J.J."/>
            <person name="Bass S."/>
            <person name="Qin H."/>
            <person name="Dragoi I."/>
            <person name="Sellers P."/>
            <person name="McDonald L.A."/>
            <person name="Utterback T.R."/>
            <person name="Fleischmann R.D."/>
            <person name="Nierman W.C."/>
            <person name="White O."/>
            <person name="Salzberg S.L."/>
            <person name="Smith H.O."/>
            <person name="Colwell R.R."/>
            <person name="Mekalanos J.J."/>
            <person name="Venter J.C."/>
            <person name="Fraser C.M."/>
        </authorList>
    </citation>
    <scope>NUCLEOTIDE SEQUENCE [LARGE SCALE GENOMIC DNA]</scope>
    <source>
        <strain>ATCC 39315 / El Tor Inaba N16961</strain>
    </source>
</reference>
<reference key="3">
    <citation type="journal article" date="2010" name="Microb. Pathog.">
        <title>Construction and characterization of rtxA and rtxC mutants of auxotrophic O139 Vibrio cholerae.</title>
        <authorList>
            <person name="Cheong T.G."/>
            <person name="Chan M."/>
            <person name="Kurunathan S."/>
            <person name="Ali S.A."/>
            <person name="ZiNing T."/>
            <person name="Zainuddin Z.F."/>
            <person name="Lalitha P."/>
            <person name="Ravichandran M."/>
        </authorList>
    </citation>
    <scope>DISRUPTION PHENOTYPE</scope>
    <source>
        <strain>4260B / Serotype O139</strain>
    </source>
</reference>
<keyword id="KW-0012">Acyltransferase</keyword>
<keyword id="KW-0204">Cytolysis</keyword>
<keyword id="KW-0963">Cytoplasm</keyword>
<keyword id="KW-1185">Reference proteome</keyword>
<keyword id="KW-0808">Transferase</keyword>
<name>RTXC_VIBCH</name>
<protein>
    <recommendedName>
        <fullName>Lysine-acyltransferase RtxC</fullName>
        <ecNumber evidence="1">2.3.1.-</ecNumber>
    </recommendedName>
</protein>
<dbReference type="EC" id="2.3.1.-" evidence="1"/>
<dbReference type="EMBL" id="AF119150">
    <property type="protein sequence ID" value="AAD21058.1"/>
    <property type="molecule type" value="Genomic_DNA"/>
</dbReference>
<dbReference type="EMBL" id="AE003852">
    <property type="protein sequence ID" value="AAF94607.1"/>
    <property type="molecule type" value="Genomic_DNA"/>
</dbReference>
<dbReference type="PIR" id="B82199">
    <property type="entry name" value="B82199"/>
</dbReference>
<dbReference type="RefSeq" id="NP_231093.1">
    <property type="nucleotide sequence ID" value="NC_002505.1"/>
</dbReference>
<dbReference type="RefSeq" id="WP_001881196.1">
    <property type="nucleotide sequence ID" value="NZ_LT906614.1"/>
</dbReference>
<dbReference type="SMR" id="Q9X4W3"/>
<dbReference type="STRING" id="243277.VC_1450"/>
<dbReference type="DNASU" id="2613956"/>
<dbReference type="EnsemblBacteria" id="AAF94607">
    <property type="protein sequence ID" value="AAF94607"/>
    <property type="gene ID" value="VC_1450"/>
</dbReference>
<dbReference type="KEGG" id="vch:VC_1450"/>
<dbReference type="PATRIC" id="fig|243277.26.peg.1380"/>
<dbReference type="eggNOG" id="COG2994">
    <property type="taxonomic scope" value="Bacteria"/>
</dbReference>
<dbReference type="HOGENOM" id="CLU_116529_1_0_6"/>
<dbReference type="Proteomes" id="UP000000584">
    <property type="component" value="Chromosome 1"/>
</dbReference>
<dbReference type="GO" id="GO:0005737">
    <property type="term" value="C:cytoplasm"/>
    <property type="evidence" value="ECO:0007669"/>
    <property type="project" value="UniProtKB-SubCell"/>
</dbReference>
<dbReference type="GO" id="GO:0016746">
    <property type="term" value="F:acyltransferase activity"/>
    <property type="evidence" value="ECO:0007669"/>
    <property type="project" value="UniProtKB-KW"/>
</dbReference>
<dbReference type="GO" id="GO:0031640">
    <property type="term" value="P:killing of cells of another organism"/>
    <property type="evidence" value="ECO:0007669"/>
    <property type="project" value="UniProtKB-KW"/>
</dbReference>
<dbReference type="GO" id="GO:0009404">
    <property type="term" value="P:toxin metabolic process"/>
    <property type="evidence" value="ECO:0007669"/>
    <property type="project" value="InterPro"/>
</dbReference>
<dbReference type="InterPro" id="IPR003996">
    <property type="entry name" value="RTX_toxin-activating_protC_bac"/>
</dbReference>
<dbReference type="Pfam" id="PF02794">
    <property type="entry name" value="HlyC"/>
    <property type="match status" value="1"/>
</dbReference>
<dbReference type="PRINTS" id="PR01489">
    <property type="entry name" value="RTXTOXINC"/>
</dbReference>
<gene>
    <name type="primary">rtxC</name>
    <name type="ordered locus">VC_1450</name>
</gene>
<feature type="chain" id="PRO_0000217887" description="Lysine-acyltransferase RtxC">
    <location>
        <begin position="1"/>
        <end position="153"/>
    </location>
</feature>
<feature type="active site" evidence="1">
    <location>
        <position position="32"/>
    </location>
</feature>
<comment type="function">
    <text evidence="1">Catalyzes fatty acylation of the protoxin (RtxA) at internal lysine residues, thereby converting it to the active toxin.</text>
</comment>
<comment type="catalytic activity">
    <reaction evidence="1">
        <text>a fatty acyl-[ACP] + L-lysyl-[protein] = N(6)-(fatty acyl)-L-lysyl-[protein] + holo-[ACP] + H(+)</text>
        <dbReference type="Rhea" id="RHEA:70667"/>
        <dbReference type="Rhea" id="RHEA-COMP:9685"/>
        <dbReference type="Rhea" id="RHEA-COMP:9752"/>
        <dbReference type="Rhea" id="RHEA-COMP:14125"/>
        <dbReference type="Rhea" id="RHEA-COMP:17946"/>
        <dbReference type="ChEBI" id="CHEBI:15378"/>
        <dbReference type="ChEBI" id="CHEBI:29969"/>
        <dbReference type="ChEBI" id="CHEBI:64479"/>
        <dbReference type="ChEBI" id="CHEBI:138651"/>
        <dbReference type="ChEBI" id="CHEBI:189854"/>
    </reaction>
    <physiologicalReaction direction="left-to-right" evidence="1">
        <dbReference type="Rhea" id="RHEA:70668"/>
    </physiologicalReaction>
</comment>
<comment type="subcellular location">
    <subcellularLocation>
        <location evidence="3">Cytoplasm</location>
    </subcellularLocation>
</comment>
<comment type="disruption phenotype">
    <text evidence="2">Cells lacking RtxC do not show reduced toxicity (PubMed:19900531). However, the RtxA toxin displays reduced actin cross-linking activity (PubMed:19900531).</text>
</comment>
<comment type="similarity">
    <text evidence="3">Belongs to the RTX toxin acyltransferase family.</text>
</comment>
<evidence type="ECO:0000250" key="1">
    <source>
        <dbReference type="UniProtKB" id="P55132"/>
    </source>
</evidence>
<evidence type="ECO:0000269" key="2">
    <source>
    </source>
</evidence>
<evidence type="ECO:0000305" key="3"/>
<sequence>MSITHQPANLTLAQIQQMIGGVMLLSQHSPLHRRYVVAEWLQRILPAFELNQFCYYEDEHGRPIAFCNWAFVSEQIRDELLSGVREISPSDWRSGQQIYIPEMIAPFGHGREVVNDLRRRVFLPWQGQKVCTVRGKVDAQNDRCIRKVQWFSI</sequence>